<accession>Q5HRS3</accession>
<evidence type="ECO:0000255" key="1">
    <source>
        <dbReference type="HAMAP-Rule" id="MF_00165"/>
    </source>
</evidence>
<protein>
    <recommendedName>
        <fullName evidence="1">Thymidylate kinase</fullName>
        <ecNumber evidence="1">2.7.4.9</ecNumber>
    </recommendedName>
    <alternativeName>
        <fullName evidence="1">dTMP kinase</fullName>
    </alternativeName>
</protein>
<organism>
    <name type="scientific">Staphylococcus epidermidis (strain ATCC 35984 / DSM 28319 / BCRC 17069 / CCUG 31568 / BM 3577 / RP62A)</name>
    <dbReference type="NCBI Taxonomy" id="176279"/>
    <lineage>
        <taxon>Bacteria</taxon>
        <taxon>Bacillati</taxon>
        <taxon>Bacillota</taxon>
        <taxon>Bacilli</taxon>
        <taxon>Bacillales</taxon>
        <taxon>Staphylococcaceae</taxon>
        <taxon>Staphylococcus</taxon>
    </lineage>
</organism>
<feature type="chain" id="PRO_0000155345" description="Thymidylate kinase">
    <location>
        <begin position="1"/>
        <end position="203"/>
    </location>
</feature>
<feature type="binding site" evidence="1">
    <location>
        <begin position="9"/>
        <end position="16"/>
    </location>
    <ligand>
        <name>ATP</name>
        <dbReference type="ChEBI" id="CHEBI:30616"/>
    </ligand>
</feature>
<comment type="function">
    <text evidence="1">Phosphorylation of dTMP to form dTDP in both de novo and salvage pathways of dTTP synthesis.</text>
</comment>
<comment type="catalytic activity">
    <reaction evidence="1">
        <text>dTMP + ATP = dTDP + ADP</text>
        <dbReference type="Rhea" id="RHEA:13517"/>
        <dbReference type="ChEBI" id="CHEBI:30616"/>
        <dbReference type="ChEBI" id="CHEBI:58369"/>
        <dbReference type="ChEBI" id="CHEBI:63528"/>
        <dbReference type="ChEBI" id="CHEBI:456216"/>
        <dbReference type="EC" id="2.7.4.9"/>
    </reaction>
</comment>
<comment type="similarity">
    <text evidence="1">Belongs to the thymidylate kinase family.</text>
</comment>
<gene>
    <name evidence="1" type="primary">tmk</name>
    <name type="ordered locus">SERP0120</name>
</gene>
<name>KTHY_STAEQ</name>
<reference key="1">
    <citation type="journal article" date="2005" name="J. Bacteriol.">
        <title>Insights on evolution of virulence and resistance from the complete genome analysis of an early methicillin-resistant Staphylococcus aureus strain and a biofilm-producing methicillin-resistant Staphylococcus epidermidis strain.</title>
        <authorList>
            <person name="Gill S.R."/>
            <person name="Fouts D.E."/>
            <person name="Archer G.L."/>
            <person name="Mongodin E.F."/>
            <person name="DeBoy R.T."/>
            <person name="Ravel J."/>
            <person name="Paulsen I.T."/>
            <person name="Kolonay J.F."/>
            <person name="Brinkac L.M."/>
            <person name="Beanan M.J."/>
            <person name="Dodson R.J."/>
            <person name="Daugherty S.C."/>
            <person name="Madupu R."/>
            <person name="Angiuoli S.V."/>
            <person name="Durkin A.S."/>
            <person name="Haft D.H."/>
            <person name="Vamathevan J.J."/>
            <person name="Khouri H."/>
            <person name="Utterback T.R."/>
            <person name="Lee C."/>
            <person name="Dimitrov G."/>
            <person name="Jiang L."/>
            <person name="Qin H."/>
            <person name="Weidman J."/>
            <person name="Tran K."/>
            <person name="Kang K.H."/>
            <person name="Hance I.R."/>
            <person name="Nelson K.E."/>
            <person name="Fraser C.M."/>
        </authorList>
    </citation>
    <scope>NUCLEOTIDE SEQUENCE [LARGE SCALE GENOMIC DNA]</scope>
    <source>
        <strain>ATCC 35984 / DSM 28319 / BCRC 17069 / CCUG 31568 / BM 3577 / RP62A</strain>
    </source>
</reference>
<proteinExistence type="inferred from homology"/>
<dbReference type="EC" id="2.7.4.9" evidence="1"/>
<dbReference type="EMBL" id="CP000029">
    <property type="protein sequence ID" value="AAW53457.1"/>
    <property type="molecule type" value="Genomic_DNA"/>
</dbReference>
<dbReference type="RefSeq" id="WP_001832211.1">
    <property type="nucleotide sequence ID" value="NC_002976.3"/>
</dbReference>
<dbReference type="SMR" id="Q5HRS3"/>
<dbReference type="STRING" id="176279.SERP0120"/>
<dbReference type="GeneID" id="50019607"/>
<dbReference type="KEGG" id="ser:SERP0120"/>
<dbReference type="eggNOG" id="COG0125">
    <property type="taxonomic scope" value="Bacteria"/>
</dbReference>
<dbReference type="HOGENOM" id="CLU_049131_0_2_9"/>
<dbReference type="Proteomes" id="UP000000531">
    <property type="component" value="Chromosome"/>
</dbReference>
<dbReference type="GO" id="GO:0005829">
    <property type="term" value="C:cytosol"/>
    <property type="evidence" value="ECO:0007669"/>
    <property type="project" value="TreeGrafter"/>
</dbReference>
<dbReference type="GO" id="GO:0005524">
    <property type="term" value="F:ATP binding"/>
    <property type="evidence" value="ECO:0007669"/>
    <property type="project" value="UniProtKB-UniRule"/>
</dbReference>
<dbReference type="GO" id="GO:0004798">
    <property type="term" value="F:dTMP kinase activity"/>
    <property type="evidence" value="ECO:0007669"/>
    <property type="project" value="UniProtKB-UniRule"/>
</dbReference>
<dbReference type="GO" id="GO:0006233">
    <property type="term" value="P:dTDP biosynthetic process"/>
    <property type="evidence" value="ECO:0007669"/>
    <property type="project" value="InterPro"/>
</dbReference>
<dbReference type="GO" id="GO:0006235">
    <property type="term" value="P:dTTP biosynthetic process"/>
    <property type="evidence" value="ECO:0007669"/>
    <property type="project" value="UniProtKB-UniRule"/>
</dbReference>
<dbReference type="GO" id="GO:0006227">
    <property type="term" value="P:dUDP biosynthetic process"/>
    <property type="evidence" value="ECO:0007669"/>
    <property type="project" value="TreeGrafter"/>
</dbReference>
<dbReference type="CDD" id="cd01672">
    <property type="entry name" value="TMPK"/>
    <property type="match status" value="1"/>
</dbReference>
<dbReference type="FunFam" id="3.40.50.300:FF:000225">
    <property type="entry name" value="Thymidylate kinase"/>
    <property type="match status" value="1"/>
</dbReference>
<dbReference type="Gene3D" id="3.40.50.300">
    <property type="entry name" value="P-loop containing nucleotide triphosphate hydrolases"/>
    <property type="match status" value="1"/>
</dbReference>
<dbReference type="HAMAP" id="MF_00165">
    <property type="entry name" value="Thymidylate_kinase"/>
    <property type="match status" value="1"/>
</dbReference>
<dbReference type="InterPro" id="IPR027417">
    <property type="entry name" value="P-loop_NTPase"/>
</dbReference>
<dbReference type="InterPro" id="IPR039430">
    <property type="entry name" value="Thymidylate_kin-like_dom"/>
</dbReference>
<dbReference type="InterPro" id="IPR018095">
    <property type="entry name" value="Thymidylate_kin_CS"/>
</dbReference>
<dbReference type="InterPro" id="IPR018094">
    <property type="entry name" value="Thymidylate_kinase"/>
</dbReference>
<dbReference type="NCBIfam" id="TIGR00041">
    <property type="entry name" value="DTMP_kinase"/>
    <property type="match status" value="1"/>
</dbReference>
<dbReference type="PANTHER" id="PTHR10344">
    <property type="entry name" value="THYMIDYLATE KINASE"/>
    <property type="match status" value="1"/>
</dbReference>
<dbReference type="PANTHER" id="PTHR10344:SF4">
    <property type="entry name" value="UMP-CMP KINASE 2, MITOCHONDRIAL"/>
    <property type="match status" value="1"/>
</dbReference>
<dbReference type="Pfam" id="PF02223">
    <property type="entry name" value="Thymidylate_kin"/>
    <property type="match status" value="1"/>
</dbReference>
<dbReference type="SUPFAM" id="SSF52540">
    <property type="entry name" value="P-loop containing nucleoside triphosphate hydrolases"/>
    <property type="match status" value="1"/>
</dbReference>
<dbReference type="PROSITE" id="PS01331">
    <property type="entry name" value="THYMIDYLATE_KINASE"/>
    <property type="match status" value="1"/>
</dbReference>
<sequence length="203" mass="23130">MSTFITFEGPEGAGKTSVIKKVSERLAKEYDIVTTREPGGVLTSEEIRRIVLDGDSIDIRTEAMLFAASRREHLVEKIIPSLQAGKIVLCDRYIDSSLAYQGYARGIGIKEVKLLNEFAINGLYPDLTIYLDVDAEIGRQRILKNNREQNRLDKEEKAFHEKVIEGYQKVISDNPHRFIKVNANHSLDKVVEETYQSIIKYLK</sequence>
<keyword id="KW-0067">ATP-binding</keyword>
<keyword id="KW-0418">Kinase</keyword>
<keyword id="KW-0545">Nucleotide biosynthesis</keyword>
<keyword id="KW-0547">Nucleotide-binding</keyword>
<keyword id="KW-1185">Reference proteome</keyword>
<keyword id="KW-0808">Transferase</keyword>